<comment type="function">
    <text evidence="1">Involved in mRNA degradation. Hydrolyzes single-stranded polyribonucleotides processively in the 3' to 5' direction (By similarity).</text>
</comment>
<comment type="catalytic activity">
    <reaction>
        <text>Exonucleolytic cleavage in the 3'- to 5'-direction to yield nucleoside 5'-phosphates.</text>
        <dbReference type="EC" id="3.1.13.1"/>
    </reaction>
</comment>
<comment type="subcellular location">
    <subcellularLocation>
        <location evidence="1">Cytoplasm</location>
    </subcellularLocation>
</comment>
<comment type="similarity">
    <text evidence="3">Belongs to the RNR ribonuclease family. RNase II subfamily.</text>
</comment>
<dbReference type="EC" id="3.1.13.1"/>
<dbReference type="EMBL" id="AE017143">
    <property type="protein sequence ID" value="AAP96092.1"/>
    <property type="molecule type" value="Genomic_DNA"/>
</dbReference>
<dbReference type="RefSeq" id="WP_010945141.1">
    <property type="nucleotide sequence ID" value="NC_002940.2"/>
</dbReference>
<dbReference type="SMR" id="Q7VLX8"/>
<dbReference type="STRING" id="233412.HD_1264"/>
<dbReference type="KEGG" id="hdu:HD_1264"/>
<dbReference type="eggNOG" id="COG4776">
    <property type="taxonomic scope" value="Bacteria"/>
</dbReference>
<dbReference type="HOGENOM" id="CLU_002333_7_3_6"/>
<dbReference type="OrthoDB" id="9764149at2"/>
<dbReference type="Proteomes" id="UP000001022">
    <property type="component" value="Chromosome"/>
</dbReference>
<dbReference type="GO" id="GO:0005829">
    <property type="term" value="C:cytosol"/>
    <property type="evidence" value="ECO:0007669"/>
    <property type="project" value="TreeGrafter"/>
</dbReference>
<dbReference type="GO" id="GO:0008859">
    <property type="term" value="F:exoribonuclease II activity"/>
    <property type="evidence" value="ECO:0007669"/>
    <property type="project" value="UniProtKB-UniRule"/>
</dbReference>
<dbReference type="GO" id="GO:0003723">
    <property type="term" value="F:RNA binding"/>
    <property type="evidence" value="ECO:0007669"/>
    <property type="project" value="UniProtKB-KW"/>
</dbReference>
<dbReference type="GO" id="GO:0006402">
    <property type="term" value="P:mRNA catabolic process"/>
    <property type="evidence" value="ECO:0007669"/>
    <property type="project" value="UniProtKB-UniRule"/>
</dbReference>
<dbReference type="Gene3D" id="2.40.50.640">
    <property type="match status" value="1"/>
</dbReference>
<dbReference type="Gene3D" id="2.40.50.140">
    <property type="entry name" value="Nucleic acid-binding proteins"/>
    <property type="match status" value="2"/>
</dbReference>
<dbReference type="HAMAP" id="MF_01036">
    <property type="entry name" value="RNase_II"/>
    <property type="match status" value="1"/>
</dbReference>
<dbReference type="InterPro" id="IPR011129">
    <property type="entry name" value="CSD"/>
</dbReference>
<dbReference type="InterPro" id="IPR012340">
    <property type="entry name" value="NA-bd_OB-fold"/>
</dbReference>
<dbReference type="InterPro" id="IPR013223">
    <property type="entry name" value="RNase_B_OB_dom"/>
</dbReference>
<dbReference type="InterPro" id="IPR011804">
    <property type="entry name" value="RNase_II"/>
</dbReference>
<dbReference type="InterPro" id="IPR001900">
    <property type="entry name" value="RNase_II/R"/>
</dbReference>
<dbReference type="InterPro" id="IPR022966">
    <property type="entry name" value="RNase_II/R_CS"/>
</dbReference>
<dbReference type="InterPro" id="IPR004476">
    <property type="entry name" value="RNase_II/RNase_R"/>
</dbReference>
<dbReference type="InterPro" id="IPR050180">
    <property type="entry name" value="RNR_Ribonuclease"/>
</dbReference>
<dbReference type="InterPro" id="IPR003029">
    <property type="entry name" value="S1_domain"/>
</dbReference>
<dbReference type="NCBIfam" id="TIGR00358">
    <property type="entry name" value="3_prime_RNase"/>
    <property type="match status" value="1"/>
</dbReference>
<dbReference type="NCBIfam" id="NF003455">
    <property type="entry name" value="PRK05054.1"/>
    <property type="match status" value="1"/>
</dbReference>
<dbReference type="NCBIfam" id="TIGR02062">
    <property type="entry name" value="RNase_B"/>
    <property type="match status" value="1"/>
</dbReference>
<dbReference type="PANTHER" id="PTHR23355:SF37">
    <property type="entry name" value="EXORIBONUCLEASE 2"/>
    <property type="match status" value="1"/>
</dbReference>
<dbReference type="PANTHER" id="PTHR23355">
    <property type="entry name" value="RIBONUCLEASE"/>
    <property type="match status" value="1"/>
</dbReference>
<dbReference type="Pfam" id="PF08206">
    <property type="entry name" value="OB_RNB"/>
    <property type="match status" value="1"/>
</dbReference>
<dbReference type="Pfam" id="PF00773">
    <property type="entry name" value="RNB"/>
    <property type="match status" value="1"/>
</dbReference>
<dbReference type="Pfam" id="PF00575">
    <property type="entry name" value="S1"/>
    <property type="match status" value="1"/>
</dbReference>
<dbReference type="SMART" id="SM00357">
    <property type="entry name" value="CSP"/>
    <property type="match status" value="1"/>
</dbReference>
<dbReference type="SMART" id="SM00955">
    <property type="entry name" value="RNB"/>
    <property type="match status" value="1"/>
</dbReference>
<dbReference type="SUPFAM" id="SSF50249">
    <property type="entry name" value="Nucleic acid-binding proteins"/>
    <property type="match status" value="3"/>
</dbReference>
<dbReference type="PROSITE" id="PS01175">
    <property type="entry name" value="RIBONUCLEASE_II"/>
    <property type="match status" value="1"/>
</dbReference>
<proteinExistence type="inferred from homology"/>
<feature type="chain" id="PRO_0000166383" description="Exoribonuclease 2">
    <location>
        <begin position="1"/>
        <end position="659"/>
    </location>
</feature>
<feature type="domain" description="RNB" evidence="2">
    <location>
        <begin position="189"/>
        <end position="530"/>
    </location>
</feature>
<feature type="domain" description="S1 motif">
    <location>
        <begin position="576"/>
        <end position="658"/>
    </location>
</feature>
<accession>Q7VLX8</accession>
<protein>
    <recommendedName>
        <fullName>Exoribonuclease 2</fullName>
        <ecNumber>3.1.13.1</ecNumber>
    </recommendedName>
    <alternativeName>
        <fullName>Exoribonuclease II</fullName>
        <shortName>RNase II</shortName>
        <shortName>Ribonuclease II</shortName>
    </alternativeName>
</protein>
<organism>
    <name type="scientific">Haemophilus ducreyi (strain 35000HP / ATCC 700724)</name>
    <dbReference type="NCBI Taxonomy" id="233412"/>
    <lineage>
        <taxon>Bacteria</taxon>
        <taxon>Pseudomonadati</taxon>
        <taxon>Pseudomonadota</taxon>
        <taxon>Gammaproteobacteria</taxon>
        <taxon>Pasteurellales</taxon>
        <taxon>Pasteurellaceae</taxon>
        <taxon>Haemophilus</taxon>
    </lineage>
</organism>
<reference key="1">
    <citation type="submission" date="2003-06" db="EMBL/GenBank/DDBJ databases">
        <title>The complete genome sequence of Haemophilus ducreyi.</title>
        <authorList>
            <person name="Munson R.S. Jr."/>
            <person name="Ray W.C."/>
            <person name="Mahairas G."/>
            <person name="Sabo P."/>
            <person name="Mungur R."/>
            <person name="Johnson L."/>
            <person name="Nguyen D."/>
            <person name="Wang J."/>
            <person name="Forst C."/>
            <person name="Hood L."/>
        </authorList>
    </citation>
    <scope>NUCLEOTIDE SEQUENCE [LARGE SCALE GENOMIC DNA]</scope>
    <source>
        <strain>35000HP / ATCC 700724</strain>
    </source>
</reference>
<gene>
    <name type="primary">rnb</name>
    <name type="ordered locus">HD_1264</name>
</gene>
<evidence type="ECO:0000250" key="1"/>
<evidence type="ECO:0000255" key="2"/>
<evidence type="ECO:0000305" key="3"/>
<name>RNB_HAEDU</name>
<sequence>MFQNNPLLAQLKQQIEANKEYVEGKVKASDKNFGFLEADKKSYFIPPLEMKKVMHGDNVKAVIKREGDKESVEIDSLIDPMLDRFIARVRFNKDGKLQLAVDHPQIRLNIPATTHKKVTEQLANDDWVVAQLKSHPLRDDRFFFAQVTEFICKADDHFAPWWVTLARHQQPRESVKTEQSYTLQDQSPREDLSHLYFTTIDSPSTQDMDDALFIEPITENAIQQGWRLVVAIADPTAYIAEDSNIEHAARQRCFTNYLPGFNIPMLPRELSDDLCSLVPNKKRPALVVYIETDLNGNLIKDASFHTAWVESKAKLAYDNVSDYLEGVEQAWQPDCAELKQQIYWLHQFTQARIQWRSKNALLFKEQMDYNFELNADGSVKSIQIQYHRIANQIIEEAMIIANICCAQFLAKHAKTGIFNSHAGFDPKNYEAVQTFLLNTLATDENRSELTDLFSPTQLATLDGYCAMRRYIEDFPEKFLELRLRRYLTFAEFKAEVAPHFGLGISHYATWTSPIRKYGDIVNHRLIKQVLLNQPIKHIESTILARLQEARRQNRLVERDIADWLYARYLLPIATQGVEFDCEITDISRGGIRAKVLENGAQIFIPCSTLHENKDEIDFIPEEIALYTKGEKIYQIGQATRVKLTDVRLETRSVLGNIIK</sequence>
<keyword id="KW-0963">Cytoplasm</keyword>
<keyword id="KW-0269">Exonuclease</keyword>
<keyword id="KW-0378">Hydrolase</keyword>
<keyword id="KW-0540">Nuclease</keyword>
<keyword id="KW-1185">Reference proteome</keyword>
<keyword id="KW-0694">RNA-binding</keyword>